<organism>
    <name type="scientific">Streptococcus pyogenes serotype M4 (strain MGAS10750)</name>
    <dbReference type="NCBI Taxonomy" id="370554"/>
    <lineage>
        <taxon>Bacteria</taxon>
        <taxon>Bacillati</taxon>
        <taxon>Bacillota</taxon>
        <taxon>Bacilli</taxon>
        <taxon>Lactobacillales</taxon>
        <taxon>Streptococcaceae</taxon>
        <taxon>Streptococcus</taxon>
    </lineage>
</organism>
<reference key="1">
    <citation type="journal article" date="2006" name="Proc. Natl. Acad. Sci. U.S.A.">
        <title>Molecular genetic anatomy of inter- and intraserotype variation in the human bacterial pathogen group A Streptococcus.</title>
        <authorList>
            <person name="Beres S.B."/>
            <person name="Richter E.W."/>
            <person name="Nagiec M.J."/>
            <person name="Sumby P."/>
            <person name="Porcella S.F."/>
            <person name="DeLeo F.R."/>
            <person name="Musser J.M."/>
        </authorList>
    </citation>
    <scope>NUCLEOTIDE SEQUENCE [LARGE SCALE GENOMIC DNA]</scope>
    <source>
        <strain>MGAS10750</strain>
    </source>
</reference>
<accession>Q1J6M6</accession>
<proteinExistence type="inferred from homology"/>
<feature type="chain" id="PRO_0000339773" description="Xanthine phosphoribosyltransferase">
    <location>
        <begin position="1"/>
        <end position="193"/>
    </location>
</feature>
<feature type="binding site" evidence="1">
    <location>
        <position position="20"/>
    </location>
    <ligand>
        <name>xanthine</name>
        <dbReference type="ChEBI" id="CHEBI:17712"/>
    </ligand>
</feature>
<feature type="binding site" evidence="1">
    <location>
        <position position="27"/>
    </location>
    <ligand>
        <name>xanthine</name>
        <dbReference type="ChEBI" id="CHEBI:17712"/>
    </ligand>
</feature>
<feature type="binding site" evidence="1">
    <location>
        <begin position="128"/>
        <end position="132"/>
    </location>
    <ligand>
        <name>5-phospho-alpha-D-ribose 1-diphosphate</name>
        <dbReference type="ChEBI" id="CHEBI:58017"/>
    </ligand>
</feature>
<feature type="binding site" evidence="1">
    <location>
        <position position="156"/>
    </location>
    <ligand>
        <name>xanthine</name>
        <dbReference type="ChEBI" id="CHEBI:17712"/>
    </ligand>
</feature>
<name>XPT_STRPF</name>
<sequence length="193" mass="20994">MQLLEERILTDGNILGENILKVDNFLTHQVDYRLMKAIGKVFAQKYAEAGITKVVTIEASGIAPAVYAAEAMDVPMIFAKKHKNITMTEGILTAEVYSFTKQVTSTVSIAGKFLSKEDKVLIIDDFLANGQAAKGLIEIIGQAGAQVVGVGIVIEKSFQDGRRLIEDMGIEVTSLARIKNFENGNLNFLEADA</sequence>
<dbReference type="EC" id="2.4.2.22" evidence="1"/>
<dbReference type="EMBL" id="CP000262">
    <property type="protein sequence ID" value="ABF37957.1"/>
    <property type="molecule type" value="Genomic_DNA"/>
</dbReference>
<dbReference type="SMR" id="Q1J6M6"/>
<dbReference type="KEGG" id="spi:MGAS10750_Spy1007"/>
<dbReference type="HOGENOM" id="CLU_099015_0_0_9"/>
<dbReference type="UniPathway" id="UPA00602">
    <property type="reaction ID" value="UER00658"/>
</dbReference>
<dbReference type="Proteomes" id="UP000002434">
    <property type="component" value="Chromosome"/>
</dbReference>
<dbReference type="GO" id="GO:0005737">
    <property type="term" value="C:cytoplasm"/>
    <property type="evidence" value="ECO:0007669"/>
    <property type="project" value="UniProtKB-SubCell"/>
</dbReference>
<dbReference type="GO" id="GO:0000310">
    <property type="term" value="F:xanthine phosphoribosyltransferase activity"/>
    <property type="evidence" value="ECO:0007669"/>
    <property type="project" value="UniProtKB-UniRule"/>
</dbReference>
<dbReference type="GO" id="GO:0006166">
    <property type="term" value="P:purine ribonucleoside salvage"/>
    <property type="evidence" value="ECO:0007669"/>
    <property type="project" value="UniProtKB-KW"/>
</dbReference>
<dbReference type="GO" id="GO:0046110">
    <property type="term" value="P:xanthine metabolic process"/>
    <property type="evidence" value="ECO:0007669"/>
    <property type="project" value="InterPro"/>
</dbReference>
<dbReference type="GO" id="GO:0032265">
    <property type="term" value="P:XMP salvage"/>
    <property type="evidence" value="ECO:0007669"/>
    <property type="project" value="UniProtKB-UniRule"/>
</dbReference>
<dbReference type="CDD" id="cd06223">
    <property type="entry name" value="PRTases_typeI"/>
    <property type="match status" value="1"/>
</dbReference>
<dbReference type="Gene3D" id="3.40.50.2020">
    <property type="match status" value="1"/>
</dbReference>
<dbReference type="HAMAP" id="MF_01184">
    <property type="entry name" value="XPRTase"/>
    <property type="match status" value="1"/>
</dbReference>
<dbReference type="InterPro" id="IPR000836">
    <property type="entry name" value="PRibTrfase_dom"/>
</dbReference>
<dbReference type="InterPro" id="IPR029057">
    <property type="entry name" value="PRTase-like"/>
</dbReference>
<dbReference type="InterPro" id="IPR050118">
    <property type="entry name" value="Pur/Pyrimidine_PRTase"/>
</dbReference>
<dbReference type="InterPro" id="IPR010079">
    <property type="entry name" value="Xanthine_PRibTrfase"/>
</dbReference>
<dbReference type="NCBIfam" id="NF006671">
    <property type="entry name" value="PRK09219.1"/>
    <property type="match status" value="1"/>
</dbReference>
<dbReference type="NCBIfam" id="TIGR01744">
    <property type="entry name" value="XPRTase"/>
    <property type="match status" value="1"/>
</dbReference>
<dbReference type="PANTHER" id="PTHR43864">
    <property type="entry name" value="HYPOXANTHINE/GUANINE PHOSPHORIBOSYLTRANSFERASE"/>
    <property type="match status" value="1"/>
</dbReference>
<dbReference type="PANTHER" id="PTHR43864:SF1">
    <property type="entry name" value="XANTHINE PHOSPHORIBOSYLTRANSFERASE"/>
    <property type="match status" value="1"/>
</dbReference>
<dbReference type="Pfam" id="PF00156">
    <property type="entry name" value="Pribosyltran"/>
    <property type="match status" value="1"/>
</dbReference>
<dbReference type="SUPFAM" id="SSF53271">
    <property type="entry name" value="PRTase-like"/>
    <property type="match status" value="1"/>
</dbReference>
<gene>
    <name evidence="1" type="primary">xpt</name>
    <name type="ordered locus">MGAS10750_Spy1007</name>
</gene>
<keyword id="KW-0963">Cytoplasm</keyword>
<keyword id="KW-0328">Glycosyltransferase</keyword>
<keyword id="KW-0660">Purine salvage</keyword>
<keyword id="KW-0808">Transferase</keyword>
<evidence type="ECO:0000255" key="1">
    <source>
        <dbReference type="HAMAP-Rule" id="MF_01184"/>
    </source>
</evidence>
<protein>
    <recommendedName>
        <fullName evidence="1">Xanthine phosphoribosyltransferase</fullName>
        <shortName evidence="1">XPRTase</shortName>
        <ecNumber evidence="1">2.4.2.22</ecNumber>
    </recommendedName>
</protein>
<comment type="function">
    <text evidence="1">Converts the preformed base xanthine, a product of nucleic acid breakdown, to xanthosine 5'-monophosphate (XMP), so it can be reused for RNA or DNA synthesis.</text>
</comment>
<comment type="catalytic activity">
    <reaction evidence="1">
        <text>XMP + diphosphate = xanthine + 5-phospho-alpha-D-ribose 1-diphosphate</text>
        <dbReference type="Rhea" id="RHEA:10800"/>
        <dbReference type="ChEBI" id="CHEBI:17712"/>
        <dbReference type="ChEBI" id="CHEBI:33019"/>
        <dbReference type="ChEBI" id="CHEBI:57464"/>
        <dbReference type="ChEBI" id="CHEBI:58017"/>
        <dbReference type="EC" id="2.4.2.22"/>
    </reaction>
</comment>
<comment type="pathway">
    <text evidence="1">Purine metabolism; XMP biosynthesis via salvage pathway; XMP from xanthine: step 1/1.</text>
</comment>
<comment type="subunit">
    <text evidence="1">Homodimer.</text>
</comment>
<comment type="subcellular location">
    <subcellularLocation>
        <location evidence="1">Cytoplasm</location>
    </subcellularLocation>
</comment>
<comment type="similarity">
    <text evidence="1">Belongs to the purine/pyrimidine phosphoribosyltransferase family. Xpt subfamily.</text>
</comment>